<reference key="1">
    <citation type="journal article" date="2009" name="J. Bacteriol.">
        <title>Genomic sequencing reveals regulatory mutations and recombinational events in the widely used MC4100 lineage of Escherichia coli K-12.</title>
        <authorList>
            <person name="Ferenci T."/>
            <person name="Zhou Z."/>
            <person name="Betteridge T."/>
            <person name="Ren Y."/>
            <person name="Liu Y."/>
            <person name="Feng L."/>
            <person name="Reeves P.R."/>
            <person name="Wang L."/>
        </authorList>
    </citation>
    <scope>NUCLEOTIDE SEQUENCE [LARGE SCALE GENOMIC DNA]</scope>
    <source>
        <strain>K12 / MC4100 / BW2952</strain>
    </source>
</reference>
<gene>
    <name evidence="1" type="primary">ulaE</name>
    <name type="ordered locus">BWG_3909</name>
</gene>
<proteinExistence type="inferred from homology"/>
<sequence>MLSKQIPLGIYEKALPAGECWLERLQLAKTLGFDFVEMSVDETDDRLSRLNWSREQRLALVNAIVETGVRVPSMCLSAHRRFPLGSEDDAVRAQGLEIMRKAIQFAQDVGIRVIQLAGYDVYYQEANNETRRRFRDGLKESVEMASRAQVTLAMEIMDYPLMSSISKALGYAHYLNNPWFQLYPDIGNLSAWDNDVQMELQAGIGHIVAVHVKDTKPGVFKNVPFGEGVVDFERCFETLKQSGYCGPYLIEMWSETAEDPAAEVAKARDWVKARMAKAGMVEAA</sequence>
<protein>
    <recommendedName>
        <fullName evidence="1">L-ribulose-5-phosphate 3-epimerase UlaE</fullName>
        <ecNumber evidence="1">5.1.3.22</ecNumber>
    </recommendedName>
    <alternativeName>
        <fullName evidence="1">L-ascorbate utilization protein E</fullName>
    </alternativeName>
    <alternativeName>
        <fullName evidence="1">L-xylulose-5-phosphate 3-epimerase</fullName>
    </alternativeName>
</protein>
<feature type="chain" id="PRO_1000216194" description="L-ribulose-5-phosphate 3-epimerase UlaE">
    <location>
        <begin position="1"/>
        <end position="284"/>
    </location>
</feature>
<comment type="function">
    <text evidence="1">Catalyzes the isomerization of L-xylulose-5-phosphate to L-ribulose-5-phosphate. Is involved in the anaerobic L-ascorbate utilization.</text>
</comment>
<comment type="catalytic activity">
    <reaction evidence="1">
        <text>L-ribulose 5-phosphate = L-xylulose 5-phosphate</text>
        <dbReference type="Rhea" id="RHEA:18497"/>
        <dbReference type="ChEBI" id="CHEBI:57829"/>
        <dbReference type="ChEBI" id="CHEBI:58226"/>
        <dbReference type="EC" id="5.1.3.22"/>
    </reaction>
</comment>
<comment type="pathway">
    <text evidence="1">Cofactor degradation; L-ascorbate degradation; D-xylulose 5-phosphate from L-ascorbate: step 3/4.</text>
</comment>
<comment type="induction">
    <text evidence="1">Induced by L-ascorbate. Repressed by UlaR.</text>
</comment>
<comment type="similarity">
    <text evidence="1">Belongs to the L-ribulose-5-phosphate 3-epimerase family.</text>
</comment>
<organism>
    <name type="scientific">Escherichia coli (strain K12 / MC4100 / BW2952)</name>
    <dbReference type="NCBI Taxonomy" id="595496"/>
    <lineage>
        <taxon>Bacteria</taxon>
        <taxon>Pseudomonadati</taxon>
        <taxon>Pseudomonadota</taxon>
        <taxon>Gammaproteobacteria</taxon>
        <taxon>Enterobacterales</taxon>
        <taxon>Enterobacteriaceae</taxon>
        <taxon>Escherichia</taxon>
    </lineage>
</organism>
<dbReference type="EC" id="5.1.3.22" evidence="1"/>
<dbReference type="EMBL" id="CP001396">
    <property type="protein sequence ID" value="ACR63686.1"/>
    <property type="molecule type" value="Genomic_DNA"/>
</dbReference>
<dbReference type="RefSeq" id="WP_000949502.1">
    <property type="nucleotide sequence ID" value="NC_012759.1"/>
</dbReference>
<dbReference type="SMR" id="C4ZR74"/>
<dbReference type="KEGG" id="ebw:BWG_3909"/>
<dbReference type="HOGENOM" id="CLU_082738_0_0_6"/>
<dbReference type="UniPathway" id="UPA00263">
    <property type="reaction ID" value="UER00379"/>
</dbReference>
<dbReference type="GO" id="GO:0016861">
    <property type="term" value="F:intramolecular oxidoreductase activity, interconverting aldoses and ketoses"/>
    <property type="evidence" value="ECO:0007669"/>
    <property type="project" value="InterPro"/>
</dbReference>
<dbReference type="GO" id="GO:0034015">
    <property type="term" value="F:L-ribulose-5-phosphate 3-epimerase activity"/>
    <property type="evidence" value="ECO:0007669"/>
    <property type="project" value="UniProtKB-UniRule"/>
</dbReference>
<dbReference type="GO" id="GO:0019854">
    <property type="term" value="P:L-ascorbic acid catabolic process"/>
    <property type="evidence" value="ECO:0007669"/>
    <property type="project" value="UniProtKB-UniRule"/>
</dbReference>
<dbReference type="FunFam" id="3.20.20.150:FF:000003">
    <property type="entry name" value="L-ribulose-5-phosphate 3-epimerase UlaE"/>
    <property type="match status" value="1"/>
</dbReference>
<dbReference type="Gene3D" id="3.20.20.150">
    <property type="entry name" value="Divalent-metal-dependent TIM barrel enzymes"/>
    <property type="match status" value="1"/>
</dbReference>
<dbReference type="HAMAP" id="MF_01951">
    <property type="entry name" value="UlaE"/>
    <property type="match status" value="1"/>
</dbReference>
<dbReference type="InterPro" id="IPR004560">
    <property type="entry name" value="L-Ru-5P_3-Epase"/>
</dbReference>
<dbReference type="InterPro" id="IPR023492">
    <property type="entry name" value="L-Ru-5P_3-Epase_Enterobacteria"/>
</dbReference>
<dbReference type="InterPro" id="IPR050417">
    <property type="entry name" value="Sugar_Epim/Isomerase"/>
</dbReference>
<dbReference type="InterPro" id="IPR036237">
    <property type="entry name" value="Xyl_isomerase-like_sf"/>
</dbReference>
<dbReference type="InterPro" id="IPR013022">
    <property type="entry name" value="Xyl_isomerase-like_TIM-brl"/>
</dbReference>
<dbReference type="NCBIfam" id="TIGR00542">
    <property type="entry name" value="hxl6Piso_put"/>
    <property type="match status" value="1"/>
</dbReference>
<dbReference type="NCBIfam" id="NF009688">
    <property type="entry name" value="PRK13209.1"/>
    <property type="match status" value="1"/>
</dbReference>
<dbReference type="NCBIfam" id="NF009689">
    <property type="entry name" value="PRK13210.1"/>
    <property type="match status" value="1"/>
</dbReference>
<dbReference type="PANTHER" id="PTHR43489">
    <property type="entry name" value="ISOMERASE"/>
    <property type="match status" value="1"/>
</dbReference>
<dbReference type="PANTHER" id="PTHR43489:SF8">
    <property type="entry name" value="L-RIBULOSE-5-PHOSPHATE 3-EPIMERASE ULAE"/>
    <property type="match status" value="1"/>
</dbReference>
<dbReference type="Pfam" id="PF01261">
    <property type="entry name" value="AP_endonuc_2"/>
    <property type="match status" value="1"/>
</dbReference>
<dbReference type="SUPFAM" id="SSF51658">
    <property type="entry name" value="Xylose isomerase-like"/>
    <property type="match status" value="1"/>
</dbReference>
<keyword id="KW-0413">Isomerase</keyword>
<evidence type="ECO:0000255" key="1">
    <source>
        <dbReference type="HAMAP-Rule" id="MF_01951"/>
    </source>
</evidence>
<name>ULAE_ECOBW</name>
<accession>C4ZR74</accession>